<evidence type="ECO:0000255" key="1">
    <source>
        <dbReference type="HAMAP-Rule" id="MF_00038"/>
    </source>
</evidence>
<proteinExistence type="inferred from homology"/>
<accession>A4SH05</accession>
<gene>
    <name evidence="1" type="primary">mraY</name>
    <name type="ordered locus">Cvib_1756</name>
</gene>
<organism>
    <name type="scientific">Chlorobium phaeovibrioides (strain DSM 265 / 1930)</name>
    <name type="common">Prosthecochloris vibrioformis (strain DSM 265)</name>
    <dbReference type="NCBI Taxonomy" id="290318"/>
    <lineage>
        <taxon>Bacteria</taxon>
        <taxon>Pseudomonadati</taxon>
        <taxon>Chlorobiota</taxon>
        <taxon>Chlorobiia</taxon>
        <taxon>Chlorobiales</taxon>
        <taxon>Chlorobiaceae</taxon>
        <taxon>Chlorobium/Pelodictyon group</taxon>
        <taxon>Chlorobium</taxon>
    </lineage>
</organism>
<dbReference type="EC" id="2.7.8.13" evidence="1"/>
<dbReference type="EMBL" id="CP000607">
    <property type="protein sequence ID" value="ABP37764.1"/>
    <property type="molecule type" value="Genomic_DNA"/>
</dbReference>
<dbReference type="SMR" id="A4SH05"/>
<dbReference type="STRING" id="290318.Cvib_1756"/>
<dbReference type="KEGG" id="pvi:Cvib_1756"/>
<dbReference type="eggNOG" id="COG0472">
    <property type="taxonomic scope" value="Bacteria"/>
</dbReference>
<dbReference type="HOGENOM" id="CLU_023982_0_0_10"/>
<dbReference type="OrthoDB" id="9805475at2"/>
<dbReference type="UniPathway" id="UPA00219"/>
<dbReference type="GO" id="GO:0005886">
    <property type="term" value="C:plasma membrane"/>
    <property type="evidence" value="ECO:0007669"/>
    <property type="project" value="UniProtKB-SubCell"/>
</dbReference>
<dbReference type="GO" id="GO:0046872">
    <property type="term" value="F:metal ion binding"/>
    <property type="evidence" value="ECO:0007669"/>
    <property type="project" value="UniProtKB-KW"/>
</dbReference>
<dbReference type="GO" id="GO:0008963">
    <property type="term" value="F:phospho-N-acetylmuramoyl-pentapeptide-transferase activity"/>
    <property type="evidence" value="ECO:0007669"/>
    <property type="project" value="UniProtKB-UniRule"/>
</dbReference>
<dbReference type="GO" id="GO:0051992">
    <property type="term" value="F:UDP-N-acetylmuramoyl-L-alanyl-D-glutamyl-meso-2,6-diaminopimelyl-D-alanyl-D-alanine:undecaprenyl-phosphate transferase activity"/>
    <property type="evidence" value="ECO:0007669"/>
    <property type="project" value="RHEA"/>
</dbReference>
<dbReference type="GO" id="GO:0051301">
    <property type="term" value="P:cell division"/>
    <property type="evidence" value="ECO:0007669"/>
    <property type="project" value="UniProtKB-KW"/>
</dbReference>
<dbReference type="GO" id="GO:0071555">
    <property type="term" value="P:cell wall organization"/>
    <property type="evidence" value="ECO:0007669"/>
    <property type="project" value="UniProtKB-KW"/>
</dbReference>
<dbReference type="GO" id="GO:0009252">
    <property type="term" value="P:peptidoglycan biosynthetic process"/>
    <property type="evidence" value="ECO:0007669"/>
    <property type="project" value="UniProtKB-UniRule"/>
</dbReference>
<dbReference type="GO" id="GO:0008360">
    <property type="term" value="P:regulation of cell shape"/>
    <property type="evidence" value="ECO:0007669"/>
    <property type="project" value="UniProtKB-KW"/>
</dbReference>
<dbReference type="CDD" id="cd06852">
    <property type="entry name" value="GT_MraY"/>
    <property type="match status" value="1"/>
</dbReference>
<dbReference type="HAMAP" id="MF_00038">
    <property type="entry name" value="MraY"/>
    <property type="match status" value="1"/>
</dbReference>
<dbReference type="InterPro" id="IPR000715">
    <property type="entry name" value="Glycosyl_transferase_4"/>
</dbReference>
<dbReference type="InterPro" id="IPR003524">
    <property type="entry name" value="PNAcMuramoyl-5peptid_Trfase"/>
</dbReference>
<dbReference type="InterPro" id="IPR018480">
    <property type="entry name" value="PNAcMuramoyl-5peptid_Trfase_CS"/>
</dbReference>
<dbReference type="NCBIfam" id="TIGR00445">
    <property type="entry name" value="mraY"/>
    <property type="match status" value="1"/>
</dbReference>
<dbReference type="PANTHER" id="PTHR22926">
    <property type="entry name" value="PHOSPHO-N-ACETYLMURAMOYL-PENTAPEPTIDE-TRANSFERASE"/>
    <property type="match status" value="1"/>
</dbReference>
<dbReference type="PANTHER" id="PTHR22926:SF5">
    <property type="entry name" value="PHOSPHO-N-ACETYLMURAMOYL-PENTAPEPTIDE-TRANSFERASE HOMOLOG"/>
    <property type="match status" value="1"/>
</dbReference>
<dbReference type="Pfam" id="PF00953">
    <property type="entry name" value="Glycos_transf_4"/>
    <property type="match status" value="1"/>
</dbReference>
<dbReference type="PROSITE" id="PS01348">
    <property type="entry name" value="MRAY_2"/>
    <property type="match status" value="1"/>
</dbReference>
<comment type="function">
    <text evidence="1">Catalyzes the initial step of the lipid cycle reactions in the biosynthesis of the cell wall peptidoglycan: transfers peptidoglycan precursor phospho-MurNAc-pentapeptide from UDP-MurNAc-pentapeptide onto the lipid carrier undecaprenyl phosphate, yielding undecaprenyl-pyrophosphoryl-MurNAc-pentapeptide, known as lipid I.</text>
</comment>
<comment type="catalytic activity">
    <reaction evidence="1">
        <text>UDP-N-acetyl-alpha-D-muramoyl-L-alanyl-gamma-D-glutamyl-meso-2,6-diaminopimeloyl-D-alanyl-D-alanine + di-trans,octa-cis-undecaprenyl phosphate = di-trans,octa-cis-undecaprenyl diphospho-N-acetyl-alpha-D-muramoyl-L-alanyl-D-glutamyl-meso-2,6-diaminopimeloyl-D-alanyl-D-alanine + UMP</text>
        <dbReference type="Rhea" id="RHEA:28386"/>
        <dbReference type="ChEBI" id="CHEBI:57865"/>
        <dbReference type="ChEBI" id="CHEBI:60392"/>
        <dbReference type="ChEBI" id="CHEBI:61386"/>
        <dbReference type="ChEBI" id="CHEBI:61387"/>
        <dbReference type="EC" id="2.7.8.13"/>
    </reaction>
</comment>
<comment type="cofactor">
    <cofactor evidence="1">
        <name>Mg(2+)</name>
        <dbReference type="ChEBI" id="CHEBI:18420"/>
    </cofactor>
</comment>
<comment type="pathway">
    <text evidence="1">Cell wall biogenesis; peptidoglycan biosynthesis.</text>
</comment>
<comment type="subcellular location">
    <subcellularLocation>
        <location evidence="1">Cell inner membrane</location>
        <topology evidence="1">Multi-pass membrane protein</topology>
    </subcellularLocation>
</comment>
<comment type="similarity">
    <text evidence="1">Belongs to the glycosyltransferase 4 family. MraY subfamily.</text>
</comment>
<feature type="chain" id="PRO_1000074552" description="Phospho-N-acetylmuramoyl-pentapeptide-transferase">
    <location>
        <begin position="1"/>
        <end position="367"/>
    </location>
</feature>
<feature type="transmembrane region" description="Helical" evidence="1">
    <location>
        <begin position="30"/>
        <end position="50"/>
    </location>
</feature>
<feature type="transmembrane region" description="Helical" evidence="1">
    <location>
        <begin position="71"/>
        <end position="91"/>
    </location>
</feature>
<feature type="transmembrane region" description="Helical" evidence="1">
    <location>
        <begin position="94"/>
        <end position="114"/>
    </location>
</feature>
<feature type="transmembrane region" description="Helical" evidence="1">
    <location>
        <begin position="138"/>
        <end position="158"/>
    </location>
</feature>
<feature type="transmembrane region" description="Helical" evidence="1">
    <location>
        <begin position="169"/>
        <end position="189"/>
    </location>
</feature>
<feature type="transmembrane region" description="Helical" evidence="1">
    <location>
        <begin position="200"/>
        <end position="220"/>
    </location>
</feature>
<feature type="transmembrane region" description="Helical" evidence="1">
    <location>
        <begin position="237"/>
        <end position="257"/>
    </location>
</feature>
<feature type="transmembrane region" description="Helical" evidence="1">
    <location>
        <begin position="264"/>
        <end position="284"/>
    </location>
</feature>
<feature type="transmembrane region" description="Helical" evidence="1">
    <location>
        <begin position="289"/>
        <end position="309"/>
    </location>
</feature>
<feature type="transmembrane region" description="Helical" evidence="1">
    <location>
        <begin position="344"/>
        <end position="364"/>
    </location>
</feature>
<keyword id="KW-0131">Cell cycle</keyword>
<keyword id="KW-0132">Cell division</keyword>
<keyword id="KW-0997">Cell inner membrane</keyword>
<keyword id="KW-1003">Cell membrane</keyword>
<keyword id="KW-0133">Cell shape</keyword>
<keyword id="KW-0961">Cell wall biogenesis/degradation</keyword>
<keyword id="KW-0460">Magnesium</keyword>
<keyword id="KW-0472">Membrane</keyword>
<keyword id="KW-0479">Metal-binding</keyword>
<keyword id="KW-0573">Peptidoglycan synthesis</keyword>
<keyword id="KW-0808">Transferase</keyword>
<keyword id="KW-0812">Transmembrane</keyword>
<keyword id="KW-1133">Transmembrane helix</keyword>
<sequence length="367" mass="40320">MLYYLLKYINEVFDPPGLGVIEYLTFRASAAAITALLITLVAGPGFIALLRARFIEPVKEEAPPEHRKKKLPTMGGLLIIISVEVSVLLWAKFTDPHVWLIMLALLWMGVIGFIDDYSKVVLKVKGGLSARWKLVGQISLGLVVGIYTSMDPVFSVLMRETTVPFFKNLTIDYGIFYVPVVIFIITALSNAVNLTDGLDGLAAGSSAIVIFGLGGFAYLAGNVVYASYLSIPFIPGGGEIAVVCMAATMACVGFLWFNANPAEIIMGDTGSLALGSTIAVTALLIKQELLLPVLGGLFFLETLSVSLQVLYFKYTRMRFGEGRRIFLMAPLHHHFQLKGWAEQKIVIRFWIVTILLFLTSLMTLKLR</sequence>
<name>MRAY_CHLPM</name>
<protein>
    <recommendedName>
        <fullName evidence="1">Phospho-N-acetylmuramoyl-pentapeptide-transferase</fullName>
        <ecNumber evidence="1">2.7.8.13</ecNumber>
    </recommendedName>
    <alternativeName>
        <fullName evidence="1">UDP-MurNAc-pentapeptide phosphotransferase</fullName>
    </alternativeName>
</protein>
<reference key="1">
    <citation type="submission" date="2007-03" db="EMBL/GenBank/DDBJ databases">
        <title>Complete sequence of Prosthecochloris vibrioformis DSM 265.</title>
        <authorList>
            <consortium name="US DOE Joint Genome Institute"/>
            <person name="Copeland A."/>
            <person name="Lucas S."/>
            <person name="Lapidus A."/>
            <person name="Barry K."/>
            <person name="Detter J.C."/>
            <person name="Glavina del Rio T."/>
            <person name="Hammon N."/>
            <person name="Israni S."/>
            <person name="Pitluck S."/>
            <person name="Schmutz J."/>
            <person name="Larimer F."/>
            <person name="Land M."/>
            <person name="Hauser L."/>
            <person name="Mikhailova N."/>
            <person name="Li T."/>
            <person name="Overmann J."/>
            <person name="Schuster S.C."/>
            <person name="Bryant D.A."/>
            <person name="Richardson P."/>
        </authorList>
    </citation>
    <scope>NUCLEOTIDE SEQUENCE [LARGE SCALE GENOMIC DNA]</scope>
    <source>
        <strain>DSM 265 / 1930</strain>
    </source>
</reference>